<evidence type="ECO:0000255" key="1">
    <source>
        <dbReference type="HAMAP-Rule" id="MF_01326"/>
    </source>
</evidence>
<evidence type="ECO:0000305" key="2"/>
<reference key="1">
    <citation type="journal article" date="2005" name="Proc. Natl. Acad. Sci. U.S.A.">
        <title>The genome of the heartwater agent Ehrlichia ruminantium contains multiple tandem repeats of actively variable copy number.</title>
        <authorList>
            <person name="Collins N.E."/>
            <person name="Liebenberg J."/>
            <person name="de Villiers E.P."/>
            <person name="Brayton K.A."/>
            <person name="Louw E."/>
            <person name="Pretorius A."/>
            <person name="Faber F.E."/>
            <person name="van Heerden H."/>
            <person name="Josemans A."/>
            <person name="van Kleef M."/>
            <person name="Steyn H.C."/>
            <person name="van Strijp M.F."/>
            <person name="Zweygarth E."/>
            <person name="Jongejan F."/>
            <person name="Maillard J.C."/>
            <person name="Berthier D."/>
            <person name="Botha M."/>
            <person name="Joubert F."/>
            <person name="Corton C.H."/>
            <person name="Thomson N.R."/>
            <person name="Allsopp M.T."/>
            <person name="Allsopp B.A."/>
        </authorList>
    </citation>
    <scope>NUCLEOTIDE SEQUENCE [LARGE SCALE GENOMIC DNA]</scope>
    <source>
        <strain>Welgevonden</strain>
    </source>
</reference>
<reference key="2">
    <citation type="journal article" date="2006" name="J. Bacteriol.">
        <title>Comparative genomic analysis of three strains of Ehrlichia ruminantium reveals an active process of genome size plasticity.</title>
        <authorList>
            <person name="Frutos R."/>
            <person name="Viari A."/>
            <person name="Ferraz C."/>
            <person name="Morgat A."/>
            <person name="Eychenie S."/>
            <person name="Kandassamy Y."/>
            <person name="Chantal I."/>
            <person name="Bensaid A."/>
            <person name="Coissac E."/>
            <person name="Vachiery N."/>
            <person name="Demaille J."/>
            <person name="Martinez D."/>
        </authorList>
    </citation>
    <scope>NUCLEOTIDE SEQUENCE [LARGE SCALE GENOMIC DNA]</scope>
    <source>
        <strain>Welgevonden</strain>
    </source>
</reference>
<protein>
    <recommendedName>
        <fullName evidence="1">Large ribosomal subunit protein uL24</fullName>
    </recommendedName>
    <alternativeName>
        <fullName evidence="2">50S ribosomal protein L24</fullName>
    </alternativeName>
</protein>
<comment type="function">
    <text evidence="1">One of two assembly initiator proteins, it binds directly to the 5'-end of the 23S rRNA, where it nucleates assembly of the 50S subunit.</text>
</comment>
<comment type="function">
    <text evidence="1">One of the proteins that surrounds the polypeptide exit tunnel on the outside of the subunit.</text>
</comment>
<comment type="subunit">
    <text evidence="1">Part of the 50S ribosomal subunit.</text>
</comment>
<comment type="similarity">
    <text evidence="1">Belongs to the universal ribosomal protein uL24 family.</text>
</comment>
<comment type="sequence caution" evidence="2">
    <conflict type="erroneous initiation">
        <sequence resource="EMBL-CDS" id="CAI27121"/>
    </conflict>
</comment>
<name>RL24_EHRRW</name>
<gene>
    <name evidence="1" type="primary">rplX</name>
    <name type="ordered locus">Erum5970</name>
    <name type="ordered locus">ERWE_CDS_06270</name>
</gene>
<accession>Q5HAT3</accession>
<accession>Q5FD69</accession>
<dbReference type="EMBL" id="CR767821">
    <property type="protein sequence ID" value="CAH58328.1"/>
    <property type="molecule type" value="Genomic_DNA"/>
</dbReference>
<dbReference type="EMBL" id="CR925678">
    <property type="protein sequence ID" value="CAI27121.1"/>
    <property type="status" value="ALT_INIT"/>
    <property type="molecule type" value="Genomic_DNA"/>
</dbReference>
<dbReference type="RefSeq" id="WP_011155278.1">
    <property type="nucleotide sequence ID" value="NC_005295.2"/>
</dbReference>
<dbReference type="SMR" id="Q5HAT3"/>
<dbReference type="GeneID" id="33058413"/>
<dbReference type="KEGG" id="eru:Erum5970"/>
<dbReference type="KEGG" id="erw:ERWE_CDS_06270"/>
<dbReference type="eggNOG" id="COG0198">
    <property type="taxonomic scope" value="Bacteria"/>
</dbReference>
<dbReference type="HOGENOM" id="CLU_093315_2_2_5"/>
<dbReference type="Proteomes" id="UP000001021">
    <property type="component" value="Chromosome"/>
</dbReference>
<dbReference type="GO" id="GO:1990904">
    <property type="term" value="C:ribonucleoprotein complex"/>
    <property type="evidence" value="ECO:0007669"/>
    <property type="project" value="UniProtKB-KW"/>
</dbReference>
<dbReference type="GO" id="GO:0005840">
    <property type="term" value="C:ribosome"/>
    <property type="evidence" value="ECO:0007669"/>
    <property type="project" value="UniProtKB-KW"/>
</dbReference>
<dbReference type="GO" id="GO:0019843">
    <property type="term" value="F:rRNA binding"/>
    <property type="evidence" value="ECO:0007669"/>
    <property type="project" value="UniProtKB-UniRule"/>
</dbReference>
<dbReference type="GO" id="GO:0003735">
    <property type="term" value="F:structural constituent of ribosome"/>
    <property type="evidence" value="ECO:0007669"/>
    <property type="project" value="InterPro"/>
</dbReference>
<dbReference type="GO" id="GO:0006412">
    <property type="term" value="P:translation"/>
    <property type="evidence" value="ECO:0007669"/>
    <property type="project" value="UniProtKB-UniRule"/>
</dbReference>
<dbReference type="CDD" id="cd06089">
    <property type="entry name" value="KOW_RPL26"/>
    <property type="match status" value="1"/>
</dbReference>
<dbReference type="Gene3D" id="2.30.30.30">
    <property type="match status" value="1"/>
</dbReference>
<dbReference type="HAMAP" id="MF_01326_B">
    <property type="entry name" value="Ribosomal_uL24_B"/>
    <property type="match status" value="1"/>
</dbReference>
<dbReference type="InterPro" id="IPR005824">
    <property type="entry name" value="KOW"/>
</dbReference>
<dbReference type="InterPro" id="IPR014722">
    <property type="entry name" value="Rib_uL2_dom2"/>
</dbReference>
<dbReference type="InterPro" id="IPR003256">
    <property type="entry name" value="Ribosomal_uL24"/>
</dbReference>
<dbReference type="InterPro" id="IPR005825">
    <property type="entry name" value="Ribosomal_uL24_CS"/>
</dbReference>
<dbReference type="InterPro" id="IPR041988">
    <property type="entry name" value="Ribosomal_uL24_KOW"/>
</dbReference>
<dbReference type="InterPro" id="IPR008991">
    <property type="entry name" value="Translation_prot_SH3-like_sf"/>
</dbReference>
<dbReference type="NCBIfam" id="TIGR01079">
    <property type="entry name" value="rplX_bact"/>
    <property type="match status" value="1"/>
</dbReference>
<dbReference type="PANTHER" id="PTHR12903">
    <property type="entry name" value="MITOCHONDRIAL RIBOSOMAL PROTEIN L24"/>
    <property type="match status" value="1"/>
</dbReference>
<dbReference type="Pfam" id="PF00467">
    <property type="entry name" value="KOW"/>
    <property type="match status" value="1"/>
</dbReference>
<dbReference type="Pfam" id="PF17136">
    <property type="entry name" value="ribosomal_L24"/>
    <property type="match status" value="1"/>
</dbReference>
<dbReference type="SMART" id="SM00739">
    <property type="entry name" value="KOW"/>
    <property type="match status" value="1"/>
</dbReference>
<dbReference type="SUPFAM" id="SSF50104">
    <property type="entry name" value="Translation proteins SH3-like domain"/>
    <property type="match status" value="1"/>
</dbReference>
<dbReference type="PROSITE" id="PS01108">
    <property type="entry name" value="RIBOSOMAL_L24"/>
    <property type="match status" value="1"/>
</dbReference>
<feature type="chain" id="PRO_0000241598" description="Large ribosomal subunit protein uL24">
    <location>
        <begin position="1"/>
        <end position="109"/>
    </location>
</feature>
<proteinExistence type="inferred from homology"/>
<sequence length="109" mass="11700">MGMKIIAGDDVLVVSGKDKGKMGKVIKVLKKKSCGKDLTFAIVSGINICKKSVKATQNSDGGIISVERPINISNIALVDSVLGIRTKVGYKFIDDKKVRFMKSSGKVIE</sequence>
<organism>
    <name type="scientific">Ehrlichia ruminantium (strain Welgevonden)</name>
    <dbReference type="NCBI Taxonomy" id="254945"/>
    <lineage>
        <taxon>Bacteria</taxon>
        <taxon>Pseudomonadati</taxon>
        <taxon>Pseudomonadota</taxon>
        <taxon>Alphaproteobacteria</taxon>
        <taxon>Rickettsiales</taxon>
        <taxon>Anaplasmataceae</taxon>
        <taxon>Ehrlichia</taxon>
    </lineage>
</organism>
<keyword id="KW-0687">Ribonucleoprotein</keyword>
<keyword id="KW-0689">Ribosomal protein</keyword>
<keyword id="KW-0694">RNA-binding</keyword>
<keyword id="KW-0699">rRNA-binding</keyword>